<keyword id="KW-0067">ATP-binding</keyword>
<keyword id="KW-0418">Kinase</keyword>
<keyword id="KW-0545">Nucleotide biosynthesis</keyword>
<keyword id="KW-0547">Nucleotide-binding</keyword>
<keyword id="KW-1185">Reference proteome</keyword>
<keyword id="KW-0808">Transferase</keyword>
<feature type="chain" id="PRO_0000155322" description="Thymidylate kinase">
    <location>
        <begin position="1"/>
        <end position="216"/>
    </location>
</feature>
<feature type="binding site" evidence="1">
    <location>
        <begin position="10"/>
        <end position="17"/>
    </location>
    <ligand>
        <name>ATP</name>
        <dbReference type="ChEBI" id="CHEBI:30616"/>
    </ligand>
</feature>
<accession>Q7V4G2</accession>
<name>KTHY_PROMM</name>
<sequence length="216" mass="23899">MSGRFLVLEGIDGCGKTTQLRHLANWLPRSGLMPEGARLHLTREPGGTALGIALRKLVLHPPGDASPEPLAELLLYAADRAQHVAQLIRPALEQGHWVLSDRFSGSTLAYQGYGRELDLDLIQQLEQIATAGLVPDLTFWLELPVEESLLRRDARSNDRIEAEGVDFLTRVATGFAVLARERSWVPLQADQQVESVSSALESQLKHHFGPLQESMR</sequence>
<protein>
    <recommendedName>
        <fullName evidence="1">Thymidylate kinase</fullName>
        <ecNumber evidence="1">2.7.4.9</ecNumber>
    </recommendedName>
    <alternativeName>
        <fullName evidence="1">dTMP kinase</fullName>
    </alternativeName>
</protein>
<dbReference type="EC" id="2.7.4.9" evidence="1"/>
<dbReference type="EMBL" id="BX548175">
    <property type="protein sequence ID" value="CAE22164.1"/>
    <property type="molecule type" value="Genomic_DNA"/>
</dbReference>
<dbReference type="RefSeq" id="WP_011131355.1">
    <property type="nucleotide sequence ID" value="NC_005071.1"/>
</dbReference>
<dbReference type="SMR" id="Q7V4G2"/>
<dbReference type="KEGG" id="pmt:PMT_1990"/>
<dbReference type="eggNOG" id="COG0125">
    <property type="taxonomic scope" value="Bacteria"/>
</dbReference>
<dbReference type="HOGENOM" id="CLU_049131_0_0_3"/>
<dbReference type="OrthoDB" id="9774907at2"/>
<dbReference type="Proteomes" id="UP000001423">
    <property type="component" value="Chromosome"/>
</dbReference>
<dbReference type="GO" id="GO:0005829">
    <property type="term" value="C:cytosol"/>
    <property type="evidence" value="ECO:0007669"/>
    <property type="project" value="TreeGrafter"/>
</dbReference>
<dbReference type="GO" id="GO:0005524">
    <property type="term" value="F:ATP binding"/>
    <property type="evidence" value="ECO:0007669"/>
    <property type="project" value="UniProtKB-UniRule"/>
</dbReference>
<dbReference type="GO" id="GO:0004798">
    <property type="term" value="F:dTMP kinase activity"/>
    <property type="evidence" value="ECO:0007669"/>
    <property type="project" value="UniProtKB-UniRule"/>
</dbReference>
<dbReference type="GO" id="GO:0006233">
    <property type="term" value="P:dTDP biosynthetic process"/>
    <property type="evidence" value="ECO:0007669"/>
    <property type="project" value="InterPro"/>
</dbReference>
<dbReference type="GO" id="GO:0006235">
    <property type="term" value="P:dTTP biosynthetic process"/>
    <property type="evidence" value="ECO:0007669"/>
    <property type="project" value="UniProtKB-UniRule"/>
</dbReference>
<dbReference type="GO" id="GO:0006227">
    <property type="term" value="P:dUDP biosynthetic process"/>
    <property type="evidence" value="ECO:0007669"/>
    <property type="project" value="TreeGrafter"/>
</dbReference>
<dbReference type="CDD" id="cd01672">
    <property type="entry name" value="TMPK"/>
    <property type="match status" value="1"/>
</dbReference>
<dbReference type="FunFam" id="3.40.50.300:FF:000225">
    <property type="entry name" value="Thymidylate kinase"/>
    <property type="match status" value="1"/>
</dbReference>
<dbReference type="Gene3D" id="3.40.50.300">
    <property type="entry name" value="P-loop containing nucleotide triphosphate hydrolases"/>
    <property type="match status" value="1"/>
</dbReference>
<dbReference type="HAMAP" id="MF_00165">
    <property type="entry name" value="Thymidylate_kinase"/>
    <property type="match status" value="1"/>
</dbReference>
<dbReference type="InterPro" id="IPR027417">
    <property type="entry name" value="P-loop_NTPase"/>
</dbReference>
<dbReference type="InterPro" id="IPR039430">
    <property type="entry name" value="Thymidylate_kin-like_dom"/>
</dbReference>
<dbReference type="InterPro" id="IPR018095">
    <property type="entry name" value="Thymidylate_kin_CS"/>
</dbReference>
<dbReference type="InterPro" id="IPR018094">
    <property type="entry name" value="Thymidylate_kinase"/>
</dbReference>
<dbReference type="NCBIfam" id="TIGR00041">
    <property type="entry name" value="DTMP_kinase"/>
    <property type="match status" value="1"/>
</dbReference>
<dbReference type="PANTHER" id="PTHR10344">
    <property type="entry name" value="THYMIDYLATE KINASE"/>
    <property type="match status" value="1"/>
</dbReference>
<dbReference type="PANTHER" id="PTHR10344:SF4">
    <property type="entry name" value="UMP-CMP KINASE 2, MITOCHONDRIAL"/>
    <property type="match status" value="1"/>
</dbReference>
<dbReference type="Pfam" id="PF02223">
    <property type="entry name" value="Thymidylate_kin"/>
    <property type="match status" value="1"/>
</dbReference>
<dbReference type="SUPFAM" id="SSF52540">
    <property type="entry name" value="P-loop containing nucleoside triphosphate hydrolases"/>
    <property type="match status" value="1"/>
</dbReference>
<dbReference type="PROSITE" id="PS01331">
    <property type="entry name" value="THYMIDYLATE_KINASE"/>
    <property type="match status" value="1"/>
</dbReference>
<proteinExistence type="inferred from homology"/>
<organism>
    <name type="scientific">Prochlorococcus marinus (strain MIT 9313)</name>
    <dbReference type="NCBI Taxonomy" id="74547"/>
    <lineage>
        <taxon>Bacteria</taxon>
        <taxon>Bacillati</taxon>
        <taxon>Cyanobacteriota</taxon>
        <taxon>Cyanophyceae</taxon>
        <taxon>Synechococcales</taxon>
        <taxon>Prochlorococcaceae</taxon>
        <taxon>Prochlorococcus</taxon>
    </lineage>
</organism>
<evidence type="ECO:0000255" key="1">
    <source>
        <dbReference type="HAMAP-Rule" id="MF_00165"/>
    </source>
</evidence>
<gene>
    <name evidence="1" type="primary">tmk</name>
    <name type="ordered locus">PMT_1990</name>
</gene>
<reference key="1">
    <citation type="journal article" date="2003" name="Nature">
        <title>Genome divergence in two Prochlorococcus ecotypes reflects oceanic niche differentiation.</title>
        <authorList>
            <person name="Rocap G."/>
            <person name="Larimer F.W."/>
            <person name="Lamerdin J.E."/>
            <person name="Malfatti S."/>
            <person name="Chain P."/>
            <person name="Ahlgren N.A."/>
            <person name="Arellano A."/>
            <person name="Coleman M."/>
            <person name="Hauser L."/>
            <person name="Hess W.R."/>
            <person name="Johnson Z.I."/>
            <person name="Land M.L."/>
            <person name="Lindell D."/>
            <person name="Post A.F."/>
            <person name="Regala W."/>
            <person name="Shah M."/>
            <person name="Shaw S.L."/>
            <person name="Steglich C."/>
            <person name="Sullivan M.B."/>
            <person name="Ting C.S."/>
            <person name="Tolonen A."/>
            <person name="Webb E.A."/>
            <person name="Zinser E.R."/>
            <person name="Chisholm S.W."/>
        </authorList>
    </citation>
    <scope>NUCLEOTIDE SEQUENCE [LARGE SCALE GENOMIC DNA]</scope>
    <source>
        <strain>MIT 9313</strain>
    </source>
</reference>
<comment type="function">
    <text evidence="1">Phosphorylation of dTMP to form dTDP in both de novo and salvage pathways of dTTP synthesis.</text>
</comment>
<comment type="catalytic activity">
    <reaction evidence="1">
        <text>dTMP + ATP = dTDP + ADP</text>
        <dbReference type="Rhea" id="RHEA:13517"/>
        <dbReference type="ChEBI" id="CHEBI:30616"/>
        <dbReference type="ChEBI" id="CHEBI:58369"/>
        <dbReference type="ChEBI" id="CHEBI:63528"/>
        <dbReference type="ChEBI" id="CHEBI:456216"/>
        <dbReference type="EC" id="2.7.4.9"/>
    </reaction>
</comment>
<comment type="similarity">
    <text evidence="1">Belongs to the thymidylate kinase family.</text>
</comment>